<name>SIPL4_ORYSJ</name>
<protein>
    <recommendedName>
        <fullName>Signal peptide peptidase-like 4</fullName>
        <shortName>OsSPPL4</shortName>
        <ecNumber>3.4.23.-</ecNumber>
    </recommendedName>
</protein>
<reference key="1">
    <citation type="journal article" date="2005" name="Nature">
        <title>The map-based sequence of the rice genome.</title>
        <authorList>
            <consortium name="International rice genome sequencing project (IRGSP)"/>
        </authorList>
    </citation>
    <scope>NUCLEOTIDE SEQUENCE [LARGE SCALE GENOMIC DNA]</scope>
    <source>
        <strain>cv. Nipponbare</strain>
    </source>
</reference>
<reference key="2">
    <citation type="journal article" date="2008" name="Nucleic Acids Res.">
        <title>The rice annotation project database (RAP-DB): 2008 update.</title>
        <authorList>
            <consortium name="The rice annotation project (RAP)"/>
        </authorList>
    </citation>
    <scope>GENOME REANNOTATION</scope>
    <source>
        <strain>cv. Nipponbare</strain>
    </source>
</reference>
<reference key="3">
    <citation type="journal article" date="2013" name="Rice">
        <title>Improvement of the Oryza sativa Nipponbare reference genome using next generation sequence and optical map data.</title>
        <authorList>
            <person name="Kawahara Y."/>
            <person name="de la Bastide M."/>
            <person name="Hamilton J.P."/>
            <person name="Kanamori H."/>
            <person name="McCombie W.R."/>
            <person name="Ouyang S."/>
            <person name="Schwartz D.C."/>
            <person name="Tanaka T."/>
            <person name="Wu J."/>
            <person name="Zhou S."/>
            <person name="Childs K.L."/>
            <person name="Davidson R.M."/>
            <person name="Lin H."/>
            <person name="Quesada-Ocampo L."/>
            <person name="Vaillancourt B."/>
            <person name="Sakai H."/>
            <person name="Lee S.S."/>
            <person name="Kim J."/>
            <person name="Numa H."/>
            <person name="Itoh T."/>
            <person name="Buell C.R."/>
            <person name="Matsumoto T."/>
        </authorList>
    </citation>
    <scope>GENOME REANNOTATION</scope>
    <source>
        <strain>cv. Nipponbare</strain>
    </source>
</reference>
<reference key="4">
    <citation type="journal article" date="2005" name="PLoS Biol.">
        <title>The genomes of Oryza sativa: a history of duplications.</title>
        <authorList>
            <person name="Yu J."/>
            <person name="Wang J."/>
            <person name="Lin W."/>
            <person name="Li S."/>
            <person name="Li H."/>
            <person name="Zhou J."/>
            <person name="Ni P."/>
            <person name="Dong W."/>
            <person name="Hu S."/>
            <person name="Zeng C."/>
            <person name="Zhang J."/>
            <person name="Zhang Y."/>
            <person name="Li R."/>
            <person name="Xu Z."/>
            <person name="Li S."/>
            <person name="Li X."/>
            <person name="Zheng H."/>
            <person name="Cong L."/>
            <person name="Lin L."/>
            <person name="Yin J."/>
            <person name="Geng J."/>
            <person name="Li G."/>
            <person name="Shi J."/>
            <person name="Liu J."/>
            <person name="Lv H."/>
            <person name="Li J."/>
            <person name="Wang J."/>
            <person name="Deng Y."/>
            <person name="Ran L."/>
            <person name="Shi X."/>
            <person name="Wang X."/>
            <person name="Wu Q."/>
            <person name="Li C."/>
            <person name="Ren X."/>
            <person name="Wang J."/>
            <person name="Wang X."/>
            <person name="Li D."/>
            <person name="Liu D."/>
            <person name="Zhang X."/>
            <person name="Ji Z."/>
            <person name="Zhao W."/>
            <person name="Sun Y."/>
            <person name="Zhang Z."/>
            <person name="Bao J."/>
            <person name="Han Y."/>
            <person name="Dong L."/>
            <person name="Ji J."/>
            <person name="Chen P."/>
            <person name="Wu S."/>
            <person name="Liu J."/>
            <person name="Xiao Y."/>
            <person name="Bu D."/>
            <person name="Tan J."/>
            <person name="Yang L."/>
            <person name="Ye C."/>
            <person name="Zhang J."/>
            <person name="Xu J."/>
            <person name="Zhou Y."/>
            <person name="Yu Y."/>
            <person name="Zhang B."/>
            <person name="Zhuang S."/>
            <person name="Wei H."/>
            <person name="Liu B."/>
            <person name="Lei M."/>
            <person name="Yu H."/>
            <person name="Li Y."/>
            <person name="Xu H."/>
            <person name="Wei S."/>
            <person name="He X."/>
            <person name="Fang L."/>
            <person name="Zhang Z."/>
            <person name="Zhang Y."/>
            <person name="Huang X."/>
            <person name="Su Z."/>
            <person name="Tong W."/>
            <person name="Li J."/>
            <person name="Tong Z."/>
            <person name="Li S."/>
            <person name="Ye J."/>
            <person name="Wang L."/>
            <person name="Fang L."/>
            <person name="Lei T."/>
            <person name="Chen C.-S."/>
            <person name="Chen H.-C."/>
            <person name="Xu Z."/>
            <person name="Li H."/>
            <person name="Huang H."/>
            <person name="Zhang F."/>
            <person name="Xu H."/>
            <person name="Li N."/>
            <person name="Zhao C."/>
            <person name="Li S."/>
            <person name="Dong L."/>
            <person name="Huang Y."/>
            <person name="Li L."/>
            <person name="Xi Y."/>
            <person name="Qi Q."/>
            <person name="Li W."/>
            <person name="Zhang B."/>
            <person name="Hu W."/>
            <person name="Zhang Y."/>
            <person name="Tian X."/>
            <person name="Jiao Y."/>
            <person name="Liang X."/>
            <person name="Jin J."/>
            <person name="Gao L."/>
            <person name="Zheng W."/>
            <person name="Hao B."/>
            <person name="Liu S.-M."/>
            <person name="Wang W."/>
            <person name="Yuan L."/>
            <person name="Cao M."/>
            <person name="McDermott J."/>
            <person name="Samudrala R."/>
            <person name="Wang J."/>
            <person name="Wong G.K.-S."/>
            <person name="Yang H."/>
        </authorList>
    </citation>
    <scope>NUCLEOTIDE SEQUENCE [LARGE SCALE GENOMIC DNA]</scope>
    <source>
        <strain>cv. Nipponbare</strain>
    </source>
</reference>
<reference key="5">
    <citation type="journal article" date="2003" name="Science">
        <title>Collection, mapping, and annotation of over 28,000 cDNA clones from japonica rice.</title>
        <authorList>
            <consortium name="The rice full-length cDNA consortium"/>
        </authorList>
    </citation>
    <scope>NUCLEOTIDE SEQUENCE [LARGE SCALE MRNA]</scope>
    <source>
        <strain>cv. Nipponbare</strain>
    </source>
</reference>
<reference key="6">
    <citation type="journal article" date="2009" name="Plant Cell Rep.">
        <title>Signal peptide peptidases are expressed in the shoot apex of rice, localized to the endoplasmic reticulum.</title>
        <authorList>
            <person name="Tamura T."/>
            <person name="Kuroda M."/>
            <person name="Oikawa T."/>
            <person name="Kyozuka J."/>
            <person name="Terauchi K."/>
            <person name="Ishimaru Y."/>
            <person name="Abe K."/>
            <person name="Asakura T."/>
        </authorList>
    </citation>
    <scope>GENE FAMILY</scope>
    <scope>NOMENCLATURE</scope>
</reference>
<comment type="function">
    <text evidence="1">Intramembrane-cleaving aspartic protease (I-CLiP) that cleaves type II membrane signal peptides in the hydrophobic plane of the membrane.</text>
</comment>
<comment type="subcellular location">
    <subcellularLocation>
        <location evidence="1">Endosome membrane</location>
        <topology evidence="1">Multi-pass membrane protein</topology>
    </subcellularLocation>
</comment>
<comment type="domain">
    <text evidence="1">The PAL motif is required for normal active site conformation.</text>
</comment>
<comment type="PTM">
    <text evidence="1">Glycosylated.</text>
</comment>
<comment type="similarity">
    <text evidence="3">Belongs to the peptidase A22B family.</text>
</comment>
<comment type="sequence caution" evidence="3">
    <conflict type="erroneous initiation">
        <sequence resource="EMBL-CDS" id="BAD22919"/>
    </conflict>
    <text>Truncated N-terminus.</text>
</comment>
<comment type="sequence caution" evidence="3">
    <conflict type="erroneous initiation">
        <sequence resource="EMBL-CDS" id="EEE58070"/>
    </conflict>
    <text>Truncated N-terminus.</text>
</comment>
<evidence type="ECO:0000250" key="1"/>
<evidence type="ECO:0000255" key="2"/>
<evidence type="ECO:0000305" key="3"/>
<proteinExistence type="evidence at transcript level"/>
<gene>
    <name type="primary">SPPL4</name>
    <name type="ordered locus">Os02g0823000</name>
    <name type="ordered locus">LOC_Os02g57710</name>
    <name type="ORF">OJ1136_C04.4</name>
    <name type="ORF">OsJ_08929</name>
</gene>
<dbReference type="EC" id="3.4.23.-"/>
<dbReference type="EMBL" id="AP004026">
    <property type="protein sequence ID" value="BAD22919.1"/>
    <property type="status" value="ALT_INIT"/>
    <property type="molecule type" value="Genomic_DNA"/>
</dbReference>
<dbReference type="EMBL" id="AP008208">
    <property type="protein sequence ID" value="BAF10479.1"/>
    <property type="molecule type" value="Genomic_DNA"/>
</dbReference>
<dbReference type="EMBL" id="AP014958">
    <property type="protein sequence ID" value="BAS81654.1"/>
    <property type="molecule type" value="Genomic_DNA"/>
</dbReference>
<dbReference type="EMBL" id="CM000139">
    <property type="protein sequence ID" value="EEE58070.1"/>
    <property type="status" value="ALT_INIT"/>
    <property type="molecule type" value="Genomic_DNA"/>
</dbReference>
<dbReference type="EMBL" id="AK122065">
    <property type="protein sequence ID" value="BAH00778.1"/>
    <property type="molecule type" value="mRNA"/>
</dbReference>
<dbReference type="RefSeq" id="XP_015625571.1">
    <property type="nucleotide sequence ID" value="XM_015770085.1"/>
</dbReference>
<dbReference type="SMR" id="Q0DWA9"/>
<dbReference type="FunCoup" id="Q0DWA9">
    <property type="interactions" value="731"/>
</dbReference>
<dbReference type="STRING" id="39947.Q0DWA9"/>
<dbReference type="MEROPS" id="A22.A05"/>
<dbReference type="GlyCosmos" id="Q0DWA9">
    <property type="glycosylation" value="2 sites, No reported glycans"/>
</dbReference>
<dbReference type="PaxDb" id="39947-Q0DWA9"/>
<dbReference type="EnsemblPlants" id="Os02t0823000-01">
    <property type="protein sequence ID" value="Os02t0823000-01"/>
    <property type="gene ID" value="Os02g0823000"/>
</dbReference>
<dbReference type="Gramene" id="Os02t0823000-01">
    <property type="protein sequence ID" value="Os02t0823000-01"/>
    <property type="gene ID" value="Os02g0823000"/>
</dbReference>
<dbReference type="KEGG" id="dosa:Os02g0823000"/>
<dbReference type="eggNOG" id="KOG2442">
    <property type="taxonomic scope" value="Eukaryota"/>
</dbReference>
<dbReference type="HOGENOM" id="CLU_023799_4_1_1"/>
<dbReference type="InParanoid" id="Q0DWA9"/>
<dbReference type="OMA" id="IAPVNCP"/>
<dbReference type="OrthoDB" id="29661at2759"/>
<dbReference type="Proteomes" id="UP000000763">
    <property type="component" value="Chromosome 2"/>
</dbReference>
<dbReference type="Proteomes" id="UP000007752">
    <property type="component" value="Chromosome 2"/>
</dbReference>
<dbReference type="Proteomes" id="UP000059680">
    <property type="component" value="Chromosome 2"/>
</dbReference>
<dbReference type="GO" id="GO:0098554">
    <property type="term" value="C:cytoplasmic side of endoplasmic reticulum membrane"/>
    <property type="evidence" value="ECO:0000318"/>
    <property type="project" value="GO_Central"/>
</dbReference>
<dbReference type="GO" id="GO:0010008">
    <property type="term" value="C:endosome membrane"/>
    <property type="evidence" value="ECO:0007669"/>
    <property type="project" value="UniProtKB-SubCell"/>
</dbReference>
<dbReference type="GO" id="GO:0030660">
    <property type="term" value="C:Golgi-associated vesicle membrane"/>
    <property type="evidence" value="ECO:0000318"/>
    <property type="project" value="GO_Central"/>
</dbReference>
<dbReference type="GO" id="GO:0098553">
    <property type="term" value="C:lumenal side of endoplasmic reticulum membrane"/>
    <property type="evidence" value="ECO:0000318"/>
    <property type="project" value="GO_Central"/>
</dbReference>
<dbReference type="GO" id="GO:0005765">
    <property type="term" value="C:lysosomal membrane"/>
    <property type="evidence" value="ECO:0000318"/>
    <property type="project" value="GO_Central"/>
</dbReference>
<dbReference type="GO" id="GO:0042500">
    <property type="term" value="F:aspartic endopeptidase activity, intramembrane cleaving"/>
    <property type="evidence" value="ECO:0000318"/>
    <property type="project" value="GO_Central"/>
</dbReference>
<dbReference type="GO" id="GO:0033619">
    <property type="term" value="P:membrane protein proteolysis"/>
    <property type="evidence" value="ECO:0000318"/>
    <property type="project" value="GO_Central"/>
</dbReference>
<dbReference type="FunFam" id="3.50.30.30:FF:000007">
    <property type="entry name" value="Signal peptide peptidase-like 3"/>
    <property type="match status" value="1"/>
</dbReference>
<dbReference type="Gene3D" id="3.50.30.30">
    <property type="match status" value="1"/>
</dbReference>
<dbReference type="InterPro" id="IPR046450">
    <property type="entry name" value="PA_dom_sf"/>
</dbReference>
<dbReference type="InterPro" id="IPR003137">
    <property type="entry name" value="PA_domain"/>
</dbReference>
<dbReference type="InterPro" id="IPR007369">
    <property type="entry name" value="Peptidase_A22B_SPP"/>
</dbReference>
<dbReference type="InterPro" id="IPR006639">
    <property type="entry name" value="Preselin/SPP"/>
</dbReference>
<dbReference type="PANTHER" id="PTHR12174">
    <property type="entry name" value="SIGNAL PEPTIDE PEPTIDASE"/>
    <property type="match status" value="1"/>
</dbReference>
<dbReference type="PANTHER" id="PTHR12174:SF75">
    <property type="entry name" value="SIGNAL PEPTIDE PEPTIDASE-LIKE 2"/>
    <property type="match status" value="1"/>
</dbReference>
<dbReference type="Pfam" id="PF02225">
    <property type="entry name" value="PA"/>
    <property type="match status" value="1"/>
</dbReference>
<dbReference type="Pfam" id="PF04258">
    <property type="entry name" value="Peptidase_A22B"/>
    <property type="match status" value="1"/>
</dbReference>
<dbReference type="SMART" id="SM00730">
    <property type="entry name" value="PSN"/>
    <property type="match status" value="1"/>
</dbReference>
<dbReference type="SUPFAM" id="SSF52025">
    <property type="entry name" value="PA domain"/>
    <property type="match status" value="1"/>
</dbReference>
<feature type="signal peptide" evidence="2">
    <location>
        <begin position="1"/>
        <end position="25"/>
    </location>
</feature>
<feature type="chain" id="PRO_0000419103" description="Signal peptide peptidase-like 4">
    <location>
        <begin position="26"/>
        <end position="545"/>
    </location>
</feature>
<feature type="topological domain" description="Lumenal" evidence="2">
    <location>
        <begin position="26"/>
        <end position="193"/>
    </location>
</feature>
<feature type="transmembrane region" description="Helical" evidence="2">
    <location>
        <begin position="194"/>
        <end position="214"/>
    </location>
</feature>
<feature type="topological domain" description="Cytoplasmic" evidence="2">
    <location>
        <begin position="215"/>
        <end position="246"/>
    </location>
</feature>
<feature type="transmembrane region" description="Helical" evidence="2">
    <location>
        <begin position="247"/>
        <end position="267"/>
    </location>
</feature>
<feature type="topological domain" description="Lumenal" evidence="2">
    <location>
        <begin position="268"/>
        <end position="276"/>
    </location>
</feature>
<feature type="transmembrane region" description="Helical" evidence="2">
    <location>
        <begin position="277"/>
        <end position="297"/>
    </location>
</feature>
<feature type="topological domain" description="Cytoplasmic" evidence="2">
    <location>
        <begin position="298"/>
        <end position="317"/>
    </location>
</feature>
<feature type="transmembrane region" description="Helical" evidence="2">
    <location>
        <begin position="318"/>
        <end position="338"/>
    </location>
</feature>
<feature type="topological domain" description="Lumenal" evidence="2">
    <location>
        <begin position="339"/>
        <end position="343"/>
    </location>
</feature>
<feature type="transmembrane region" description="Helical" evidence="2">
    <location>
        <begin position="344"/>
        <end position="364"/>
    </location>
</feature>
<feature type="topological domain" description="Cytoplasmic" evidence="2">
    <location>
        <begin position="365"/>
        <end position="373"/>
    </location>
</feature>
<feature type="transmembrane region" description="Helical" evidence="2">
    <location>
        <begin position="374"/>
        <end position="394"/>
    </location>
</feature>
<feature type="topological domain" description="Lumenal" evidence="2">
    <location>
        <begin position="395"/>
        <end position="427"/>
    </location>
</feature>
<feature type="transmembrane region" description="Helical" evidence="2">
    <location>
        <begin position="428"/>
        <end position="448"/>
    </location>
</feature>
<feature type="topological domain" description="Cytoplasmic" evidence="2">
    <location>
        <begin position="449"/>
        <end position="460"/>
    </location>
</feature>
<feature type="transmembrane region" description="Helical" evidence="2">
    <location>
        <begin position="461"/>
        <end position="481"/>
    </location>
</feature>
<feature type="topological domain" description="Lumenal" evidence="2">
    <location>
        <begin position="482"/>
        <end position="485"/>
    </location>
</feature>
<feature type="transmembrane region" description="Helical" evidence="2">
    <location>
        <begin position="486"/>
        <end position="506"/>
    </location>
</feature>
<feature type="topological domain" description="Cytoplasmic" evidence="2">
    <location>
        <begin position="507"/>
        <end position="545"/>
    </location>
</feature>
<feature type="domain" description="PA">
    <location>
        <begin position="90"/>
        <end position="170"/>
    </location>
</feature>
<feature type="short sequence motif" description="PAL">
    <location>
        <begin position="490"/>
        <end position="492"/>
    </location>
</feature>
<feature type="active site" evidence="1">
    <location>
        <position position="383"/>
    </location>
</feature>
<feature type="active site" evidence="1">
    <location>
        <position position="436"/>
    </location>
</feature>
<feature type="glycosylation site" description="N-linked (GlcNAc...) asparagine" evidence="2">
    <location>
        <position position="81"/>
    </location>
</feature>
<feature type="glycosylation site" description="N-linked (GlcNAc...) asparagine" evidence="2">
    <location>
        <position position="147"/>
    </location>
</feature>
<organism>
    <name type="scientific">Oryza sativa subsp. japonica</name>
    <name type="common">Rice</name>
    <dbReference type="NCBI Taxonomy" id="39947"/>
    <lineage>
        <taxon>Eukaryota</taxon>
        <taxon>Viridiplantae</taxon>
        <taxon>Streptophyta</taxon>
        <taxon>Embryophyta</taxon>
        <taxon>Tracheophyta</taxon>
        <taxon>Spermatophyta</taxon>
        <taxon>Magnoliopsida</taxon>
        <taxon>Liliopsida</taxon>
        <taxon>Poales</taxon>
        <taxon>Poaceae</taxon>
        <taxon>BOP clade</taxon>
        <taxon>Oryzoideae</taxon>
        <taxon>Oryzeae</taxon>
        <taxon>Oryzinae</taxon>
        <taxon>Oryza</taxon>
        <taxon>Oryza sativa</taxon>
    </lineage>
</organism>
<keyword id="KW-0967">Endosome</keyword>
<keyword id="KW-0325">Glycoprotein</keyword>
<keyword id="KW-0378">Hydrolase</keyword>
<keyword id="KW-0472">Membrane</keyword>
<keyword id="KW-1185">Reference proteome</keyword>
<keyword id="KW-0732">Signal</keyword>
<keyword id="KW-0812">Transmembrane</keyword>
<keyword id="KW-1133">Transmembrane helix</keyword>
<sequence>MGTSSPEMAAALLLVMAALAGVAAGGDIVHQDDEAPKIPGCSNDFVLVKVQTWVNNREDGEFVGVGARFGPTIESKEKHANRTGLLLADPIDCCDPPTQKVAGDVLLVQRGNCKFTKKAKNAEAAGASAIIIINHVHELYKMVCDRNETDLDINIPAVLLPKDAGNDLQKLLTRGKVSVQLYSPDRPLVDTAEVFLWLMAVGTILCASYWSAWSAREAVIEQEKLLKDGHESSLNLEAGGSSGMVDINMTSAILFVVIASCFLIMLYKLMSHWFVELLVVIFCIGGVEGLQTCLVALLSRWFKPAAESFVKVPFFGAVSYLTIAVCPFCIVFAVIWAVYRRMTYAWIGQDILGIALIVTVIQIVRIPNLKVGSVLLSCSFLYDIFWVFISKMWFHESVMIVVARGDKTDEDGVPMLLKIPRMFDPWGGFSIIGFGDILLPGLLIAFALRYDWAAKKTLQSGYFLWSMVAYGSGLMITYVALNLMDGHGQPALLYIVPFTLGTFIALGRKRGELRNLWTRGQPERVCTHMHMQPSPKDTNCDAVSS</sequence>
<accession>Q0DWA9</accession>
<accession>A0A0P0VRF0</accession>
<accession>Q6K9X7</accession>